<dbReference type="EC" id="2.5.1.75" evidence="1"/>
<dbReference type="EMBL" id="CP000736">
    <property type="protein sequence ID" value="ABR52239.1"/>
    <property type="molecule type" value="Genomic_DNA"/>
</dbReference>
<dbReference type="SMR" id="A6U1C1"/>
<dbReference type="KEGG" id="sah:SaurJH1_1388"/>
<dbReference type="HOGENOM" id="CLU_032616_0_1_9"/>
<dbReference type="GO" id="GO:0005524">
    <property type="term" value="F:ATP binding"/>
    <property type="evidence" value="ECO:0007669"/>
    <property type="project" value="UniProtKB-UniRule"/>
</dbReference>
<dbReference type="GO" id="GO:0052381">
    <property type="term" value="F:tRNA dimethylallyltransferase activity"/>
    <property type="evidence" value="ECO:0007669"/>
    <property type="project" value="UniProtKB-UniRule"/>
</dbReference>
<dbReference type="GO" id="GO:0006400">
    <property type="term" value="P:tRNA modification"/>
    <property type="evidence" value="ECO:0007669"/>
    <property type="project" value="TreeGrafter"/>
</dbReference>
<dbReference type="FunFam" id="1.10.20.140:FF:000004">
    <property type="entry name" value="tRNA dimethylallyltransferase"/>
    <property type="match status" value="1"/>
</dbReference>
<dbReference type="Gene3D" id="1.10.20.140">
    <property type="match status" value="1"/>
</dbReference>
<dbReference type="Gene3D" id="3.40.50.300">
    <property type="entry name" value="P-loop containing nucleotide triphosphate hydrolases"/>
    <property type="match status" value="1"/>
</dbReference>
<dbReference type="HAMAP" id="MF_00185">
    <property type="entry name" value="IPP_trans"/>
    <property type="match status" value="1"/>
</dbReference>
<dbReference type="InterPro" id="IPR039657">
    <property type="entry name" value="Dimethylallyltransferase"/>
</dbReference>
<dbReference type="InterPro" id="IPR018022">
    <property type="entry name" value="IPT"/>
</dbReference>
<dbReference type="InterPro" id="IPR027417">
    <property type="entry name" value="P-loop_NTPase"/>
</dbReference>
<dbReference type="NCBIfam" id="TIGR00174">
    <property type="entry name" value="miaA"/>
    <property type="match status" value="1"/>
</dbReference>
<dbReference type="PANTHER" id="PTHR11088">
    <property type="entry name" value="TRNA DIMETHYLALLYLTRANSFERASE"/>
    <property type="match status" value="1"/>
</dbReference>
<dbReference type="PANTHER" id="PTHR11088:SF60">
    <property type="entry name" value="TRNA DIMETHYLALLYLTRANSFERASE"/>
    <property type="match status" value="1"/>
</dbReference>
<dbReference type="Pfam" id="PF01715">
    <property type="entry name" value="IPPT"/>
    <property type="match status" value="1"/>
</dbReference>
<dbReference type="SUPFAM" id="SSF52540">
    <property type="entry name" value="P-loop containing nucleoside triphosphate hydrolases"/>
    <property type="match status" value="2"/>
</dbReference>
<feature type="chain" id="PRO_1000077404" description="tRNA dimethylallyltransferase">
    <location>
        <begin position="1"/>
        <end position="311"/>
    </location>
</feature>
<feature type="region of interest" description="Interaction with substrate tRNA" evidence="1">
    <location>
        <begin position="38"/>
        <end position="41"/>
    </location>
</feature>
<feature type="region of interest" description="Interaction with substrate tRNA" evidence="1">
    <location>
        <begin position="166"/>
        <end position="170"/>
    </location>
</feature>
<feature type="binding site" evidence="1">
    <location>
        <begin position="13"/>
        <end position="20"/>
    </location>
    <ligand>
        <name>ATP</name>
        <dbReference type="ChEBI" id="CHEBI:30616"/>
    </ligand>
</feature>
<feature type="binding site" evidence="1">
    <location>
        <begin position="15"/>
        <end position="20"/>
    </location>
    <ligand>
        <name>substrate</name>
    </ligand>
</feature>
<feature type="site" description="Interaction with substrate tRNA" evidence="1">
    <location>
        <position position="104"/>
    </location>
</feature>
<keyword id="KW-0067">ATP-binding</keyword>
<keyword id="KW-0460">Magnesium</keyword>
<keyword id="KW-0547">Nucleotide-binding</keyword>
<keyword id="KW-0808">Transferase</keyword>
<keyword id="KW-0819">tRNA processing</keyword>
<organism>
    <name type="scientific">Staphylococcus aureus (strain JH1)</name>
    <dbReference type="NCBI Taxonomy" id="359787"/>
    <lineage>
        <taxon>Bacteria</taxon>
        <taxon>Bacillati</taxon>
        <taxon>Bacillota</taxon>
        <taxon>Bacilli</taxon>
        <taxon>Bacillales</taxon>
        <taxon>Staphylococcaceae</taxon>
        <taxon>Staphylococcus</taxon>
    </lineage>
</organism>
<accession>A6U1C1</accession>
<comment type="function">
    <text evidence="1">Catalyzes the transfer of a dimethylallyl group onto the adenine at position 37 in tRNAs that read codons beginning with uridine, leading to the formation of N6-(dimethylallyl)adenosine (i(6)A).</text>
</comment>
<comment type="catalytic activity">
    <reaction evidence="1">
        <text>adenosine(37) in tRNA + dimethylallyl diphosphate = N(6)-dimethylallyladenosine(37) in tRNA + diphosphate</text>
        <dbReference type="Rhea" id="RHEA:26482"/>
        <dbReference type="Rhea" id="RHEA-COMP:10162"/>
        <dbReference type="Rhea" id="RHEA-COMP:10375"/>
        <dbReference type="ChEBI" id="CHEBI:33019"/>
        <dbReference type="ChEBI" id="CHEBI:57623"/>
        <dbReference type="ChEBI" id="CHEBI:74411"/>
        <dbReference type="ChEBI" id="CHEBI:74415"/>
        <dbReference type="EC" id="2.5.1.75"/>
    </reaction>
</comment>
<comment type="cofactor">
    <cofactor evidence="1">
        <name>Mg(2+)</name>
        <dbReference type="ChEBI" id="CHEBI:18420"/>
    </cofactor>
</comment>
<comment type="subunit">
    <text evidence="1">Monomer.</text>
</comment>
<comment type="similarity">
    <text evidence="1">Belongs to the IPP transferase family.</text>
</comment>
<proteinExistence type="inferred from homology"/>
<gene>
    <name evidence="1" type="primary">miaA</name>
    <name type="ordered locus">SaurJH1_1388</name>
</gene>
<reference key="1">
    <citation type="submission" date="2007-06" db="EMBL/GenBank/DDBJ databases">
        <title>Complete sequence of chromosome of Staphylococcus aureus subsp. aureus JH1.</title>
        <authorList>
            <consortium name="US DOE Joint Genome Institute"/>
            <person name="Copeland A."/>
            <person name="Lucas S."/>
            <person name="Lapidus A."/>
            <person name="Barry K."/>
            <person name="Detter J.C."/>
            <person name="Glavina del Rio T."/>
            <person name="Hammon N."/>
            <person name="Israni S."/>
            <person name="Dalin E."/>
            <person name="Tice H."/>
            <person name="Pitluck S."/>
            <person name="Chain P."/>
            <person name="Malfatti S."/>
            <person name="Shin M."/>
            <person name="Vergez L."/>
            <person name="Schmutz J."/>
            <person name="Larimer F."/>
            <person name="Land M."/>
            <person name="Hauser L."/>
            <person name="Kyrpides N."/>
            <person name="Ivanova N."/>
            <person name="Tomasz A."/>
            <person name="Richardson P."/>
        </authorList>
    </citation>
    <scope>NUCLEOTIDE SEQUENCE [LARGE SCALE GENOMIC DNA]</scope>
    <source>
        <strain>JH1</strain>
    </source>
</reference>
<name>MIAA_STAA2</name>
<evidence type="ECO:0000255" key="1">
    <source>
        <dbReference type="HAMAP-Rule" id="MF_00185"/>
    </source>
</evidence>
<sequence>MNKNKPFIVVIVGPTASGKTELSIELAKRINGEIISGDSMQVYKHMNIGTAKVTPEEMDGIPHHLIDILNPDDTFSAYEFKRLAEDLITDITNRGKVPIIAGGTGLYIQSLIYNYELEDETVTPAQLSIVKQKLSALEHLDNQQLHDYLAQFDAVSAENIHPNNRQRVLRAIEYYLKTKKLLSNRKKVQQFTENYDTLLLGIEMSRKTLYSRINKRVDIMLDHGLFREVQQLVEQGYESCQSMQAIGYKELIPVINGQMIYEDAVNDLKQHSRQYAKRQMTWFKNKMSVHWLDKENMSLQMMLDEITTQIK</sequence>
<protein>
    <recommendedName>
        <fullName evidence="1">tRNA dimethylallyltransferase</fullName>
        <ecNumber evidence="1">2.5.1.75</ecNumber>
    </recommendedName>
    <alternativeName>
        <fullName evidence="1">Dimethylallyl diphosphate:tRNA dimethylallyltransferase</fullName>
        <shortName evidence="1">DMAPP:tRNA dimethylallyltransferase</shortName>
        <shortName evidence="1">DMATase</shortName>
    </alternativeName>
    <alternativeName>
        <fullName evidence="1">Isopentenyl-diphosphate:tRNA isopentenyltransferase</fullName>
        <shortName evidence="1">IPP transferase</shortName>
        <shortName evidence="1">IPPT</shortName>
        <shortName evidence="1">IPTase</shortName>
    </alternativeName>
</protein>